<reference key="1">
    <citation type="journal article" date="2005" name="Nucleic Acids Res.">
        <title>The genome sequence of Salmonella enterica serovar Choleraesuis, a highly invasive and resistant zoonotic pathogen.</title>
        <authorList>
            <person name="Chiu C.-H."/>
            <person name="Tang P."/>
            <person name="Chu C."/>
            <person name="Hu S."/>
            <person name="Bao Q."/>
            <person name="Yu J."/>
            <person name="Chou Y.-Y."/>
            <person name="Wang H.-S."/>
            <person name="Lee Y.-S."/>
        </authorList>
    </citation>
    <scope>NUCLEOTIDE SEQUENCE [LARGE SCALE GENOMIC DNA]</scope>
    <source>
        <strain>SC-B67</strain>
    </source>
</reference>
<sequence>MLTLDTLNTMLAVSEEGMVEEMILALLASPQLVIFFEKFPRLKNAVTADLPRWREALRSRLKDARVPPELTEEVMCYQQSQLLSTPQFIVQLPQILALLHRLHSPYAAQAKQLTESNSTFTPALHTLFLQRWRLSLVVQATTLNQQLLEEEREQLLSDVQERMTLSGQLEPTLAENDNAAGRLWDMSTGQLKRGDYQLIVKYGEFLAAQPELMQLAEQLGRSREAKSVPKKDAPMETFRTLVREPATVPEQVDGIQQGDDILRLLPPELAALGITELEYEFYRRLVEKQLLTYRLHGEAWREKVTERPVVHQDVDEQPRGPFIVCVDTSGSMGGFNEQCAKAFCLALMRVALADNRRCFIMLFSTDVVRYELSGPEGIEQAIRFLSQRFRGGTDIASCFRAIIERMQGREWFDADAVVISDFIAQRLPDDVVSKVGELQRLHQHRFHAVAMSAHGKPGIMRIFDHIWRFDTGMRSRLLRRWRR</sequence>
<dbReference type="EMBL" id="AE017220">
    <property type="protein sequence ID" value="AAX67697.1"/>
    <property type="molecule type" value="Genomic_DNA"/>
</dbReference>
<dbReference type="RefSeq" id="WP_000956594.1">
    <property type="nucleotide sequence ID" value="NC_006905.1"/>
</dbReference>
<dbReference type="SMR" id="Q57HW5"/>
<dbReference type="KEGG" id="sec:SCH_3791"/>
<dbReference type="HOGENOM" id="CLU_022130_0_0_6"/>
<dbReference type="Proteomes" id="UP000000538">
    <property type="component" value="Chromosome"/>
</dbReference>
<dbReference type="GO" id="GO:0005829">
    <property type="term" value="C:cytosol"/>
    <property type="evidence" value="ECO:0007669"/>
    <property type="project" value="TreeGrafter"/>
</dbReference>
<dbReference type="CDD" id="cd01462">
    <property type="entry name" value="VWA_YIEM_type"/>
    <property type="match status" value="1"/>
</dbReference>
<dbReference type="Gene3D" id="3.40.50.410">
    <property type="entry name" value="von Willebrand factor, type A domain"/>
    <property type="match status" value="1"/>
</dbReference>
<dbReference type="HAMAP" id="MF_01626">
    <property type="entry name" value="ViaA"/>
    <property type="match status" value="1"/>
</dbReference>
<dbReference type="InterPro" id="IPR008912">
    <property type="entry name" value="Uncharacterised_CoxE"/>
</dbReference>
<dbReference type="InterPro" id="IPR023481">
    <property type="entry name" value="Uncharacterised_ViaA"/>
</dbReference>
<dbReference type="InterPro" id="IPR002035">
    <property type="entry name" value="VWF_A"/>
</dbReference>
<dbReference type="InterPro" id="IPR036465">
    <property type="entry name" value="vWFA_dom_sf"/>
</dbReference>
<dbReference type="NCBIfam" id="NF008230">
    <property type="entry name" value="PRK10997.1"/>
    <property type="match status" value="1"/>
</dbReference>
<dbReference type="PANTHER" id="PTHR36846">
    <property type="entry name" value="PROTEIN VIAA"/>
    <property type="match status" value="1"/>
</dbReference>
<dbReference type="PANTHER" id="PTHR36846:SF1">
    <property type="entry name" value="PROTEIN VIAA"/>
    <property type="match status" value="1"/>
</dbReference>
<dbReference type="Pfam" id="PF05762">
    <property type="entry name" value="VWA_CoxE"/>
    <property type="match status" value="1"/>
</dbReference>
<dbReference type="SMART" id="SM00327">
    <property type="entry name" value="VWA"/>
    <property type="match status" value="1"/>
</dbReference>
<dbReference type="SUPFAM" id="SSF53300">
    <property type="entry name" value="vWA-like"/>
    <property type="match status" value="1"/>
</dbReference>
<comment type="function">
    <text evidence="1">Component of the RavA-ViaA chaperone complex, which may act on the membrane to optimize the function of some of the respiratory chains. ViaA stimulates the ATPase activity of RavA.</text>
</comment>
<comment type="subunit">
    <text evidence="1">Homodimer. Interacts with RavA.</text>
</comment>
<comment type="subcellular location">
    <subcellularLocation>
        <location evidence="1">Cytoplasm</location>
    </subcellularLocation>
</comment>
<comment type="similarity">
    <text evidence="1">Belongs to the ViaA family.</text>
</comment>
<gene>
    <name evidence="1" type="primary">viaA</name>
    <name type="ordered locus">SCH_3791</name>
</gene>
<organism>
    <name type="scientific">Salmonella choleraesuis (strain SC-B67)</name>
    <dbReference type="NCBI Taxonomy" id="321314"/>
    <lineage>
        <taxon>Bacteria</taxon>
        <taxon>Pseudomonadati</taxon>
        <taxon>Pseudomonadota</taxon>
        <taxon>Gammaproteobacteria</taxon>
        <taxon>Enterobacterales</taxon>
        <taxon>Enterobacteriaceae</taxon>
        <taxon>Salmonella</taxon>
    </lineage>
</organism>
<name>VIAA_SALCH</name>
<evidence type="ECO:0000255" key="1">
    <source>
        <dbReference type="HAMAP-Rule" id="MF_01626"/>
    </source>
</evidence>
<feature type="chain" id="PRO_0000196587" description="Regulatory protein ViaA">
    <location>
        <begin position="1"/>
        <end position="483"/>
    </location>
</feature>
<keyword id="KW-0143">Chaperone</keyword>
<keyword id="KW-0963">Cytoplasm</keyword>
<protein>
    <recommendedName>
        <fullName evidence="1">Regulatory protein ViaA</fullName>
    </recommendedName>
    <alternativeName>
        <fullName evidence="1">VWA interacting with AAA+ ATPase</fullName>
    </alternativeName>
</protein>
<proteinExistence type="inferred from homology"/>
<accession>Q57HW5</accession>